<keyword id="KW-1015">Disulfide bond</keyword>
<keyword id="KW-0872">Ion channel impairing toxin</keyword>
<keyword id="KW-0960">Knottin</keyword>
<keyword id="KW-0528">Neurotoxin</keyword>
<keyword id="KW-0632">Potassium channel impairing toxin</keyword>
<keyword id="KW-0964">Secreted</keyword>
<keyword id="KW-0800">Toxin</keyword>
<keyword id="KW-1220">Voltage-gated potassium channel impairing toxin</keyword>
<dbReference type="EMBL" id="AY159340">
    <property type="protein sequence ID" value="AAO22218.1"/>
    <property type="molecule type" value="mRNA"/>
</dbReference>
<dbReference type="SMR" id="Q86QV3"/>
<dbReference type="GO" id="GO:0005576">
    <property type="term" value="C:extracellular region"/>
    <property type="evidence" value="ECO:0007669"/>
    <property type="project" value="UniProtKB-SubCell"/>
</dbReference>
<dbReference type="GO" id="GO:0019870">
    <property type="term" value="F:potassium channel inhibitor activity"/>
    <property type="evidence" value="ECO:0007669"/>
    <property type="project" value="InterPro"/>
</dbReference>
<dbReference type="GO" id="GO:0090729">
    <property type="term" value="F:toxin activity"/>
    <property type="evidence" value="ECO:0007669"/>
    <property type="project" value="UniProtKB-KW"/>
</dbReference>
<dbReference type="Gene3D" id="3.30.30.10">
    <property type="entry name" value="Knottin, scorpion toxin-like"/>
    <property type="match status" value="1"/>
</dbReference>
<dbReference type="InterPro" id="IPR012622">
    <property type="entry name" value="Ergtoxin"/>
</dbReference>
<dbReference type="InterPro" id="IPR036574">
    <property type="entry name" value="Scorpion_toxin-like_sf"/>
</dbReference>
<dbReference type="Pfam" id="PF08086">
    <property type="entry name" value="Toxin_17"/>
    <property type="match status" value="1"/>
</dbReference>
<dbReference type="SUPFAM" id="SSF57095">
    <property type="entry name" value="Scorpion toxin-like"/>
    <property type="match status" value="1"/>
</dbReference>
<dbReference type="PROSITE" id="PS60026">
    <property type="entry name" value="ERGTX"/>
    <property type="match status" value="1"/>
</dbReference>
<proteinExistence type="inferred from homology"/>
<name>KGX13_CENGR</name>
<reference key="1">
    <citation type="journal article" date="2002" name="FEBS Lett.">
        <title>A large number of novel Ergtoxin-like genes and ERG K+-channels blocking peptides from scorpions of the genus Centruroides.</title>
        <authorList>
            <person name="Corona M."/>
            <person name="Gurrola G.B."/>
            <person name="Merino E."/>
            <person name="Cassulini R.R."/>
            <person name="Valdez-Cruz N.A."/>
            <person name="Garcia B."/>
            <person name="Ramirez-Dominguez M.E."/>
            <person name="Coronas F.I."/>
            <person name="Zamudio F.Z."/>
            <person name="Wanke E."/>
            <person name="Possani L.D."/>
        </authorList>
    </citation>
    <scope>NUCLEOTIDE SEQUENCE [MRNA]</scope>
    <scope>NOMENCLATURE</scope>
    <source>
        <tissue>Venom gland</tissue>
    </source>
</reference>
<feature type="chain" id="PRO_0000066847" description="Potassium channel toxin gamma-KTx 1.3">
    <location>
        <begin position="1"/>
        <end position="42"/>
    </location>
</feature>
<feature type="disulfide bond" evidence="2">
    <location>
        <begin position="5"/>
        <end position="23"/>
    </location>
</feature>
<feature type="disulfide bond" evidence="2">
    <location>
        <begin position="11"/>
        <end position="34"/>
    </location>
</feature>
<feature type="disulfide bond" evidence="2">
    <location>
        <begin position="20"/>
        <end position="39"/>
    </location>
</feature>
<feature type="disulfide bond" evidence="2">
    <location>
        <begin position="24"/>
        <end position="41"/>
    </location>
</feature>
<protein>
    <recommendedName>
        <fullName evidence="3">Potassium channel toxin gamma-KTx 1.3</fullName>
    </recommendedName>
    <alternativeName>
        <fullName evidence="4">CgErgTx1</fullName>
        <shortName evidence="3">CgErg1</shortName>
    </alternativeName>
    <alternativeName>
        <fullName evidence="3">Ergtoxin-like protein</fullName>
    </alternativeName>
</protein>
<organism>
    <name type="scientific">Centruroides gracilis</name>
    <name type="common">Slenderbrown scorpion</name>
    <name type="synonym">Florida bark scorpion</name>
    <dbReference type="NCBI Taxonomy" id="217898"/>
    <lineage>
        <taxon>Eukaryota</taxon>
        <taxon>Metazoa</taxon>
        <taxon>Ecdysozoa</taxon>
        <taxon>Arthropoda</taxon>
        <taxon>Chelicerata</taxon>
        <taxon>Arachnida</taxon>
        <taxon>Scorpiones</taxon>
        <taxon>Buthida</taxon>
        <taxon>Buthoidea</taxon>
        <taxon>Buthidae</taxon>
        <taxon>Centruroides</taxon>
    </lineage>
</organism>
<sequence length="42" mass="4791">DRDSCVDKSRCAKYGHYQECTDCCKKYGHNGGTCMFFKCKCA</sequence>
<comment type="function">
    <text evidence="2">Blocks Kv11/ERG potassium channels.</text>
</comment>
<comment type="subcellular location">
    <subcellularLocation>
        <location evidence="2">Secreted</location>
    </subcellularLocation>
</comment>
<comment type="tissue specificity">
    <text evidence="4">Expressed by the venom gland.</text>
</comment>
<comment type="domain">
    <text evidence="1">The presence of a 'disulfide through disulfide knot' structurally defines this protein as a knottin.</text>
</comment>
<comment type="domain">
    <text evidence="2">Has the CSalpha/beta fold, which comprises one or two short alpha helices connected to anti-parallel beta-sheets stabilized by three or four disulfide bonds.</text>
</comment>
<comment type="similarity">
    <text evidence="4">Belongs to the ergtoxin family. Gamma-KTx 1 subfamily.</text>
</comment>
<accession>Q86QV3</accession>
<evidence type="ECO:0000250" key="1"/>
<evidence type="ECO:0000250" key="2">
    <source>
        <dbReference type="UniProtKB" id="Q86QT3"/>
    </source>
</evidence>
<evidence type="ECO:0000303" key="3">
    <source>
    </source>
</evidence>
<evidence type="ECO:0000305" key="4"/>